<accession>B0TU65</accession>
<evidence type="ECO:0000255" key="1">
    <source>
        <dbReference type="HAMAP-Rule" id="MF_00185"/>
    </source>
</evidence>
<protein>
    <recommendedName>
        <fullName evidence="1">tRNA dimethylallyltransferase</fullName>
        <ecNumber evidence="1">2.5.1.75</ecNumber>
    </recommendedName>
    <alternativeName>
        <fullName evidence="1">Dimethylallyl diphosphate:tRNA dimethylallyltransferase</fullName>
        <shortName evidence="1">DMAPP:tRNA dimethylallyltransferase</shortName>
        <shortName evidence="1">DMATase</shortName>
    </alternativeName>
    <alternativeName>
        <fullName evidence="1">Isopentenyl-diphosphate:tRNA isopentenyltransferase</fullName>
        <shortName evidence="1">IPP transferase</shortName>
        <shortName evidence="1">IPPT</shortName>
        <shortName evidence="1">IPTase</shortName>
    </alternativeName>
</protein>
<comment type="function">
    <text evidence="1">Catalyzes the transfer of a dimethylallyl group onto the adenine at position 37 in tRNAs that read codons beginning with uridine, leading to the formation of N6-(dimethylallyl)adenosine (i(6)A).</text>
</comment>
<comment type="catalytic activity">
    <reaction evidence="1">
        <text>adenosine(37) in tRNA + dimethylallyl diphosphate = N(6)-dimethylallyladenosine(37) in tRNA + diphosphate</text>
        <dbReference type="Rhea" id="RHEA:26482"/>
        <dbReference type="Rhea" id="RHEA-COMP:10162"/>
        <dbReference type="Rhea" id="RHEA-COMP:10375"/>
        <dbReference type="ChEBI" id="CHEBI:33019"/>
        <dbReference type="ChEBI" id="CHEBI:57623"/>
        <dbReference type="ChEBI" id="CHEBI:74411"/>
        <dbReference type="ChEBI" id="CHEBI:74415"/>
        <dbReference type="EC" id="2.5.1.75"/>
    </reaction>
</comment>
<comment type="cofactor">
    <cofactor evidence="1">
        <name>Mg(2+)</name>
        <dbReference type="ChEBI" id="CHEBI:18420"/>
    </cofactor>
</comment>
<comment type="subunit">
    <text evidence="1">Monomer.</text>
</comment>
<comment type="similarity">
    <text evidence="1">Belongs to the IPP transferase family.</text>
</comment>
<feature type="chain" id="PRO_1000077403" description="tRNA dimethylallyltransferase">
    <location>
        <begin position="1"/>
        <end position="308"/>
    </location>
</feature>
<feature type="region of interest" description="Interaction with substrate tRNA" evidence="1">
    <location>
        <begin position="39"/>
        <end position="42"/>
    </location>
</feature>
<feature type="region of interest" description="Interaction with substrate tRNA" evidence="1">
    <location>
        <begin position="163"/>
        <end position="167"/>
    </location>
</feature>
<feature type="region of interest" description="Interaction with substrate tRNA" evidence="1">
    <location>
        <begin position="244"/>
        <end position="249"/>
    </location>
</feature>
<feature type="binding site" evidence="1">
    <location>
        <begin position="14"/>
        <end position="21"/>
    </location>
    <ligand>
        <name>ATP</name>
        <dbReference type="ChEBI" id="CHEBI:30616"/>
    </ligand>
</feature>
<feature type="binding site" evidence="1">
    <location>
        <begin position="16"/>
        <end position="21"/>
    </location>
    <ligand>
        <name>substrate</name>
    </ligand>
</feature>
<feature type="site" description="Interaction with substrate tRNA" evidence="1">
    <location>
        <position position="105"/>
    </location>
</feature>
<feature type="site" description="Interaction with substrate tRNA" evidence="1">
    <location>
        <position position="127"/>
    </location>
</feature>
<dbReference type="EC" id="2.5.1.75" evidence="1"/>
<dbReference type="EMBL" id="CP000931">
    <property type="protein sequence ID" value="ABZ78176.1"/>
    <property type="molecule type" value="Genomic_DNA"/>
</dbReference>
<dbReference type="RefSeq" id="WP_012278695.1">
    <property type="nucleotide sequence ID" value="NC_010334.1"/>
</dbReference>
<dbReference type="SMR" id="B0TU65"/>
<dbReference type="STRING" id="458817.Shal_3635"/>
<dbReference type="KEGG" id="shl:Shal_3635"/>
<dbReference type="eggNOG" id="COG0324">
    <property type="taxonomic scope" value="Bacteria"/>
</dbReference>
<dbReference type="HOGENOM" id="CLU_032616_0_0_6"/>
<dbReference type="OrthoDB" id="9776390at2"/>
<dbReference type="Proteomes" id="UP000001317">
    <property type="component" value="Chromosome"/>
</dbReference>
<dbReference type="GO" id="GO:0005524">
    <property type="term" value="F:ATP binding"/>
    <property type="evidence" value="ECO:0007669"/>
    <property type="project" value="UniProtKB-UniRule"/>
</dbReference>
<dbReference type="GO" id="GO:0052381">
    <property type="term" value="F:tRNA dimethylallyltransferase activity"/>
    <property type="evidence" value="ECO:0007669"/>
    <property type="project" value="UniProtKB-UniRule"/>
</dbReference>
<dbReference type="GO" id="GO:0006400">
    <property type="term" value="P:tRNA modification"/>
    <property type="evidence" value="ECO:0007669"/>
    <property type="project" value="TreeGrafter"/>
</dbReference>
<dbReference type="FunFam" id="1.10.20.140:FF:000001">
    <property type="entry name" value="tRNA dimethylallyltransferase"/>
    <property type="match status" value="1"/>
</dbReference>
<dbReference type="Gene3D" id="1.10.20.140">
    <property type="match status" value="1"/>
</dbReference>
<dbReference type="Gene3D" id="3.40.50.300">
    <property type="entry name" value="P-loop containing nucleotide triphosphate hydrolases"/>
    <property type="match status" value="1"/>
</dbReference>
<dbReference type="HAMAP" id="MF_00185">
    <property type="entry name" value="IPP_trans"/>
    <property type="match status" value="1"/>
</dbReference>
<dbReference type="InterPro" id="IPR039657">
    <property type="entry name" value="Dimethylallyltransferase"/>
</dbReference>
<dbReference type="InterPro" id="IPR018022">
    <property type="entry name" value="IPT"/>
</dbReference>
<dbReference type="InterPro" id="IPR027417">
    <property type="entry name" value="P-loop_NTPase"/>
</dbReference>
<dbReference type="NCBIfam" id="TIGR00174">
    <property type="entry name" value="miaA"/>
    <property type="match status" value="1"/>
</dbReference>
<dbReference type="PANTHER" id="PTHR11088">
    <property type="entry name" value="TRNA DIMETHYLALLYLTRANSFERASE"/>
    <property type="match status" value="1"/>
</dbReference>
<dbReference type="PANTHER" id="PTHR11088:SF60">
    <property type="entry name" value="TRNA DIMETHYLALLYLTRANSFERASE"/>
    <property type="match status" value="1"/>
</dbReference>
<dbReference type="Pfam" id="PF01715">
    <property type="entry name" value="IPPT"/>
    <property type="match status" value="1"/>
</dbReference>
<dbReference type="SUPFAM" id="SSF52540">
    <property type="entry name" value="P-loop containing nucleoside triphosphate hydrolases"/>
    <property type="match status" value="1"/>
</dbReference>
<proteinExistence type="inferred from homology"/>
<gene>
    <name evidence="1" type="primary">miaA</name>
    <name type="ordered locus">Shal_3635</name>
</gene>
<organism>
    <name type="scientific">Shewanella halifaxensis (strain HAW-EB4)</name>
    <dbReference type="NCBI Taxonomy" id="458817"/>
    <lineage>
        <taxon>Bacteria</taxon>
        <taxon>Pseudomonadati</taxon>
        <taxon>Pseudomonadota</taxon>
        <taxon>Gammaproteobacteria</taxon>
        <taxon>Alteromonadales</taxon>
        <taxon>Shewanellaceae</taxon>
        <taxon>Shewanella</taxon>
    </lineage>
</organism>
<keyword id="KW-0067">ATP-binding</keyword>
<keyword id="KW-0460">Magnesium</keyword>
<keyword id="KW-0547">Nucleotide-binding</keyword>
<keyword id="KW-0808">Transferase</keyword>
<keyword id="KW-0819">tRNA processing</keyword>
<sequence>MTDNKSQKVITLMGPTASGKTALAIELVKQYNCEIISVDSALIYKEMDIGTAKPDAAEQAAAPHRLIDIIDPAKSYSAADFRRDALAQIEDILSRGKTPLLVGGTMMYFKALLEGLSPLPAADEVVRAQIACEAQEFGWQALHDQLREIDPVSAERIHPNDPQRLARALEVYRISGQSLTELTKTKSEAFPYEAVQFAIAPSDRKVLHRAIETRFKTMLTLGFTAEVERLKARGDLDLDLPSMRCVGYRQCWQYLDGEIDYETMVEKAIVATRQLAKRQLTWLRGWPDLIWLESGAEDNLATVMRHSR</sequence>
<name>MIAA_SHEHH</name>
<reference key="1">
    <citation type="submission" date="2008-01" db="EMBL/GenBank/DDBJ databases">
        <title>Complete sequence of Shewanella halifaxensis HAW-EB4.</title>
        <authorList>
            <consortium name="US DOE Joint Genome Institute"/>
            <person name="Copeland A."/>
            <person name="Lucas S."/>
            <person name="Lapidus A."/>
            <person name="Glavina del Rio T."/>
            <person name="Dalin E."/>
            <person name="Tice H."/>
            <person name="Bruce D."/>
            <person name="Goodwin L."/>
            <person name="Pitluck S."/>
            <person name="Sims D."/>
            <person name="Brettin T."/>
            <person name="Detter J.C."/>
            <person name="Han C."/>
            <person name="Kuske C.R."/>
            <person name="Schmutz J."/>
            <person name="Larimer F."/>
            <person name="Land M."/>
            <person name="Hauser L."/>
            <person name="Kyrpides N."/>
            <person name="Kim E."/>
            <person name="Zhao J.-S."/>
            <person name="Richardson P."/>
        </authorList>
    </citation>
    <scope>NUCLEOTIDE SEQUENCE [LARGE SCALE GENOMIC DNA]</scope>
    <source>
        <strain>HAW-EB4</strain>
    </source>
</reference>